<accession>P0C545</accession>
<feature type="chain" id="PRO_0000291766" description="Putative truncated non-structural protein 3b">
    <location>
        <begin position="1"/>
        <end position="40"/>
    </location>
</feature>
<feature type="sequence variant">
    <original>I</original>
    <variation>S</variation>
    <location>
        <position position="16"/>
    </location>
</feature>
<sequence>MIGGLFLNTLSFVIVINHVIVNNTANVHTTQHENVIVQQH</sequence>
<dbReference type="EMBL" id="AF033000">
    <property type="protein sequence ID" value="AAB87470.1"/>
    <property type="molecule type" value="mRNA"/>
</dbReference>
<dbReference type="EMBL" id="DQ010921">
    <property type="status" value="NOT_ANNOTATED_CDS"/>
    <property type="molecule type" value="Genomic_RNA"/>
</dbReference>
<dbReference type="EMBL" id="AY994055">
    <property type="status" value="NOT_ANNOTATED_CDS"/>
    <property type="molecule type" value="Genomic_DNA"/>
</dbReference>
<dbReference type="Proteomes" id="UP000000835">
    <property type="component" value="Segment"/>
</dbReference>
<dbReference type="Proteomes" id="UP000140386">
    <property type="component" value="Genome"/>
</dbReference>
<reference key="1">
    <citation type="journal article" date="1998" name="Virus Genes">
        <title>Nucleotide sequence of the inter-structural gene region of feline infectious peritonitis virus.</title>
        <authorList>
            <person name="Yamanaka M."/>
            <person name="Crisp T."/>
            <person name="Brown R."/>
            <person name="Dale B."/>
        </authorList>
    </citation>
    <scope>NUCLEOTIDE SEQUENCE [MRNA]</scope>
</reference>
<reference key="2">
    <citation type="journal article" date="2005" name="J. Gen. Virol.">
        <title>Genomic RNA sequence of Feline coronavirus strain FIPV WSU-79/1146.</title>
        <authorList>
            <person name="Dye C."/>
            <person name="Siddell S.G."/>
        </authorList>
    </citation>
    <scope>NUCLEOTIDE SEQUENCE [GENOMIC RNA]</scope>
</reference>
<reference key="3">
    <citation type="submission" date="2005-03" db="EMBL/GenBank/DDBJ databases">
        <authorList>
            <person name="Haijema B.J."/>
            <person name="de Groot-Mijnes J.D.F."/>
            <person name="Vennema H."/>
            <person name="Raamsman M.J."/>
            <person name="Rottier P.J.M."/>
            <person name="de Groot R.J."/>
        </authorList>
    </citation>
    <scope>NUCLEOTIDE SEQUENCE [GENOMIC RNA]</scope>
</reference>
<protein>
    <recommendedName>
        <fullName>Putative truncated non-structural protein 3b</fullName>
        <shortName>ns3b</shortName>
    </recommendedName>
    <alternativeName>
        <fullName>Accessory protein 3b</fullName>
    </alternativeName>
</protein>
<evidence type="ECO:0000305" key="1"/>
<gene>
    <name type="ORF">3b</name>
</gene>
<name>NS3B_FIPV</name>
<comment type="similarity">
    <text evidence="1">Belongs to the coronaviruses NS3b protein family.</text>
</comment>
<comment type="caution">
    <text evidence="1">Could be the product of a pseudogene.</text>
</comment>
<proteinExistence type="uncertain"/>
<organism>
    <name type="scientific">Feline coronavirus (strain FIPV WSU-79/1146)</name>
    <name type="common">FCoV</name>
    <dbReference type="NCBI Taxonomy" id="33734"/>
    <lineage>
        <taxon>Viruses</taxon>
        <taxon>Riboviria</taxon>
        <taxon>Orthornavirae</taxon>
        <taxon>Pisuviricota</taxon>
        <taxon>Pisoniviricetes</taxon>
        <taxon>Nidovirales</taxon>
        <taxon>Cornidovirineae</taxon>
        <taxon>Coronaviridae</taxon>
        <taxon>Orthocoronavirinae</taxon>
        <taxon>Alphacoronavirus</taxon>
        <taxon>Tegacovirus</taxon>
        <taxon>Alphacoronavirus 1</taxon>
    </lineage>
</organism>
<organismHost>
    <name type="scientific">Felidae</name>
    <name type="common">cat family</name>
    <dbReference type="NCBI Taxonomy" id="9681"/>
</organismHost>
<keyword id="KW-1185">Reference proteome</keyword>